<keyword id="KW-0002">3D-structure</keyword>
<keyword id="KW-0179">Complement alternate pathway</keyword>
<keyword id="KW-0180">Complement pathway</keyword>
<keyword id="KW-0204">Cytolysis</keyword>
<keyword id="KW-0903">Direct protein sequencing</keyword>
<keyword id="KW-1015">Disulfide bond</keyword>
<keyword id="KW-0245">EGF-like domain</keyword>
<keyword id="KW-0325">Glycoprotein</keyword>
<keyword id="KW-0391">Immunity</keyword>
<keyword id="KW-0399">Innate immunity</keyword>
<keyword id="KW-0472">Membrane</keyword>
<keyword id="KW-0473">Membrane attack complex</keyword>
<keyword id="KW-0597">Phosphoprotein</keyword>
<keyword id="KW-1267">Proteomics identification</keyword>
<keyword id="KW-1185">Reference proteome</keyword>
<keyword id="KW-0677">Repeat</keyword>
<keyword id="KW-0964">Secreted</keyword>
<keyword id="KW-0732">Signal</keyword>
<keyword id="KW-1052">Target cell membrane</keyword>
<keyword id="KW-1053">Target membrane</keyword>
<keyword id="KW-0812">Transmembrane</keyword>
<keyword id="KW-1134">Transmembrane beta strand</keyword>
<accession>P07358</accession>
<accession>A1L4K7</accession>
<feature type="signal peptide" evidence="1">
    <location>
        <begin position="1"/>
        <end position="32"/>
    </location>
</feature>
<feature type="propeptide" id="PRO_0000023591" evidence="19">
    <location>
        <begin position="33"/>
        <end position="54"/>
    </location>
</feature>
<feature type="chain" id="PRO_0000023592" description="Complement component C8 beta chain">
    <location>
        <begin position="55"/>
        <end position="591"/>
    </location>
</feature>
<feature type="transmembrane region" description="Beta stranded" evidence="16 31">
    <location>
        <begin position="252"/>
        <end position="259"/>
    </location>
</feature>
<feature type="transmembrane region" description="Beta stranded" evidence="16 31">
    <location>
        <begin position="262"/>
        <end position="269"/>
    </location>
</feature>
<feature type="transmembrane region" description="Beta stranded" evidence="16 31">
    <location>
        <begin position="379"/>
        <end position="386"/>
    </location>
</feature>
<feature type="transmembrane region" description="Beta stranded" evidence="16 31">
    <location>
        <begin position="392"/>
        <end position="399"/>
    </location>
</feature>
<feature type="domain" description="TSP type-1 1" evidence="3">
    <location>
        <begin position="64"/>
        <end position="117"/>
    </location>
</feature>
<feature type="domain" description="LDL-receptor class A" evidence="2">
    <location>
        <begin position="120"/>
        <end position="157"/>
    </location>
</feature>
<feature type="domain" description="MACPF" evidence="4">
    <location>
        <begin position="158"/>
        <end position="504"/>
    </location>
</feature>
<feature type="domain" description="EGF-like">
    <location>
        <begin position="505"/>
        <end position="535"/>
    </location>
</feature>
<feature type="domain" description="TSP type-1 2" evidence="3">
    <location>
        <begin position="545"/>
        <end position="591"/>
    </location>
</feature>
<feature type="region of interest" description="Disordered" evidence="5">
    <location>
        <begin position="568"/>
        <end position="591"/>
    </location>
</feature>
<feature type="binding site" evidence="11 29">
    <location>
        <position position="138"/>
    </location>
    <ligand>
        <name>Ca(2+)</name>
        <dbReference type="ChEBI" id="CHEBI:29108"/>
    </ligand>
</feature>
<feature type="binding site" evidence="11 29">
    <location>
        <position position="141"/>
    </location>
    <ligand>
        <name>Ca(2+)</name>
        <dbReference type="ChEBI" id="CHEBI:29108"/>
    </ligand>
</feature>
<feature type="binding site" evidence="11 29">
    <location>
        <position position="143"/>
    </location>
    <ligand>
        <name>Ca(2+)</name>
        <dbReference type="ChEBI" id="CHEBI:29108"/>
    </ligand>
</feature>
<feature type="binding site" evidence="11 29">
    <location>
        <position position="145"/>
    </location>
    <ligand>
        <name>Ca(2+)</name>
        <dbReference type="ChEBI" id="CHEBI:29108"/>
    </ligand>
</feature>
<feature type="binding site" evidence="11 29">
    <location>
        <position position="151"/>
    </location>
    <ligand>
        <name>Ca(2+)</name>
        <dbReference type="ChEBI" id="CHEBI:29108"/>
    </ligand>
</feature>
<feature type="binding site" evidence="11 29">
    <location>
        <position position="152"/>
    </location>
    <ligand>
        <name>Ca(2+)</name>
        <dbReference type="ChEBI" id="CHEBI:29108"/>
    </ligand>
</feature>
<feature type="modified residue" description="Phosphothreonine" evidence="11">
    <location>
        <position position="418"/>
    </location>
</feature>
<feature type="glycosylation site" description="C-linked (Man) tryptophan" evidence="6">
    <location>
        <position position="70"/>
    </location>
</feature>
<feature type="glycosylation site" description="C-linked (Man) tryptophan" evidence="6">
    <location>
        <position position="73"/>
    </location>
</feature>
<feature type="glycosylation site" description="N-linked (GlcNAc...) asparagine" evidence="1">
    <location>
        <position position="101"/>
    </location>
</feature>
<feature type="glycosylation site" description="N-linked (GlcNAc...) asparagine" evidence="8 9 16">
    <location>
        <position position="243"/>
    </location>
</feature>
<feature type="glycosylation site" description="C-linked (Man) tryptophan" evidence="6">
    <location>
        <position position="551"/>
    </location>
</feature>
<feature type="glycosylation site" description="C-linked (Man) tryptophan" evidence="6">
    <location>
        <position position="554"/>
    </location>
</feature>
<feature type="disulfide bond" evidence="11 16 31">
    <location>
        <begin position="65"/>
        <end position="100"/>
    </location>
</feature>
<feature type="disulfide bond" evidence="11 16 31">
    <location>
        <begin position="76"/>
        <end position="110"/>
    </location>
</feature>
<feature type="disulfide bond" evidence="11 16 31">
    <location>
        <begin position="79"/>
        <end position="116"/>
    </location>
</feature>
<feature type="disulfide bond" evidence="11 16 31">
    <location>
        <begin position="122"/>
        <end position="133"/>
    </location>
</feature>
<feature type="disulfide bond" evidence="11 16 31">
    <location>
        <begin position="127"/>
        <end position="146"/>
    </location>
</feature>
<feature type="disulfide bond" evidence="11 16 31">
    <location>
        <begin position="140"/>
        <end position="155"/>
    </location>
</feature>
<feature type="disulfide bond" evidence="16 31">
    <location>
        <begin position="162"/>
        <end position="200"/>
    </location>
</feature>
<feature type="disulfide bond" evidence="11 16 31">
    <location>
        <begin position="378"/>
        <end position="403"/>
    </location>
</feature>
<feature type="disulfide bond" evidence="11 16 31">
    <location>
        <begin position="503"/>
        <end position="550"/>
    </location>
</feature>
<feature type="disulfide bond" evidence="11 16 31">
    <location>
        <begin position="505"/>
        <end position="521"/>
    </location>
</feature>
<feature type="disulfide bond" evidence="11 16 31">
    <location>
        <begin position="508"/>
        <end position="523"/>
    </location>
</feature>
<feature type="disulfide bond" evidence="11 16 31">
    <location>
        <begin position="525"/>
        <end position="534"/>
    </location>
</feature>
<feature type="disulfide bond" evidence="11 16 31">
    <location>
        <begin position="557"/>
        <end position="590"/>
    </location>
</feature>
<feature type="sequence variant" id="VAR_090458" description="In C8D2." evidence="23">
    <location>
        <begin position="91"/>
        <end position="591"/>
    </location>
</feature>
<feature type="sequence variant" id="VAR_027649" description="In dbSNP:rs12067507.">
    <original>E</original>
    <variation>K</variation>
    <location>
        <position position="108"/>
    </location>
</feature>
<feature type="sequence variant" id="VAR_012642" description="In allotype C8B B; dbSNP:rs1013579." evidence="7">
    <original>G</original>
    <variation>R</variation>
    <location>
        <position position="117"/>
    </location>
</feature>
<feature type="sequence variant" id="VAR_090459" description="In C8D2." evidence="23">
    <location>
        <begin position="121"/>
        <end position="591"/>
    </location>
</feature>
<feature type="sequence variant" id="VAR_027650" description="In dbSNP:rs12085435.">
    <original>P</original>
    <variation>L</variation>
    <location>
        <position position="261"/>
    </location>
</feature>
<feature type="sequence variant" id="VAR_090460" description="In C8D2." evidence="23">
    <location>
        <begin position="274"/>
        <end position="591"/>
    </location>
</feature>
<feature type="sequence variant" id="VAR_090461" description="In C8D2." evidence="24">
    <location>
        <begin position="428"/>
        <end position="591"/>
    </location>
</feature>
<feature type="turn" evidence="37">
    <location>
        <begin position="78"/>
        <end position="81"/>
    </location>
</feature>
<feature type="strand" evidence="37">
    <location>
        <begin position="82"/>
        <end position="86"/>
    </location>
</feature>
<feature type="strand" evidence="37">
    <location>
        <begin position="89"/>
        <end position="91"/>
    </location>
</feature>
<feature type="strand" evidence="37">
    <location>
        <begin position="104"/>
        <end position="109"/>
    </location>
</feature>
<feature type="strand" evidence="37">
    <location>
        <begin position="123"/>
        <end position="126"/>
    </location>
</feature>
<feature type="turn" evidence="37">
    <location>
        <begin position="128"/>
        <end position="130"/>
    </location>
</feature>
<feature type="helix" evidence="37">
    <location>
        <begin position="136"/>
        <end position="138"/>
    </location>
</feature>
<feature type="strand" evidence="37">
    <location>
        <begin position="141"/>
        <end position="143"/>
    </location>
</feature>
<feature type="strand" evidence="37">
    <location>
        <begin position="146"/>
        <end position="149"/>
    </location>
</feature>
<feature type="helix" evidence="38">
    <location>
        <begin position="150"/>
        <end position="152"/>
    </location>
</feature>
<feature type="helix" evidence="37">
    <location>
        <begin position="172"/>
        <end position="176"/>
    </location>
</feature>
<feature type="strand" evidence="37">
    <location>
        <begin position="177"/>
        <end position="179"/>
    </location>
</feature>
<feature type="turn" evidence="37">
    <location>
        <begin position="181"/>
        <end position="183"/>
    </location>
</feature>
<feature type="strand" evidence="37">
    <location>
        <begin position="186"/>
        <end position="189"/>
    </location>
</feature>
<feature type="strand" evidence="37">
    <location>
        <begin position="201"/>
        <end position="205"/>
    </location>
</feature>
<feature type="strand" evidence="37">
    <location>
        <begin position="208"/>
        <end position="212"/>
    </location>
</feature>
<feature type="strand" evidence="37">
    <location>
        <begin position="216"/>
        <end position="221"/>
    </location>
</feature>
<feature type="strand" evidence="37">
    <location>
        <begin position="229"/>
        <end position="236"/>
    </location>
</feature>
<feature type="helix" evidence="37">
    <location>
        <begin position="237"/>
        <end position="240"/>
    </location>
</feature>
<feature type="turn" evidence="37">
    <location>
        <begin position="256"/>
        <end position="258"/>
    </location>
</feature>
<feature type="turn" evidence="37">
    <location>
        <begin position="269"/>
        <end position="271"/>
    </location>
</feature>
<feature type="strand" evidence="37">
    <location>
        <begin position="272"/>
        <end position="275"/>
    </location>
</feature>
<feature type="helix" evidence="37">
    <location>
        <begin position="276"/>
        <end position="283"/>
    </location>
</feature>
<feature type="strand" evidence="37">
    <location>
        <begin position="290"/>
        <end position="297"/>
    </location>
</feature>
<feature type="strand" evidence="37">
    <location>
        <begin position="299"/>
        <end position="306"/>
    </location>
</feature>
<feature type="strand" evidence="37">
    <location>
        <begin position="308"/>
        <end position="310"/>
    </location>
</feature>
<feature type="helix" evidence="37">
    <location>
        <begin position="315"/>
        <end position="321"/>
    </location>
</feature>
<feature type="helix" evidence="37">
    <location>
        <begin position="330"/>
        <end position="340"/>
    </location>
</feature>
<feature type="strand" evidence="37">
    <location>
        <begin position="342"/>
        <end position="352"/>
    </location>
</feature>
<feature type="strand" evidence="37">
    <location>
        <begin position="355"/>
        <end position="361"/>
    </location>
</feature>
<feature type="helix" evidence="37">
    <location>
        <begin position="362"/>
        <end position="365"/>
    </location>
</feature>
<feature type="turn" evidence="37">
    <location>
        <begin position="366"/>
        <end position="369"/>
    </location>
</feature>
<feature type="helix" evidence="37">
    <location>
        <begin position="372"/>
        <end position="378"/>
    </location>
</feature>
<feature type="turn" evidence="37">
    <location>
        <begin position="379"/>
        <end position="381"/>
    </location>
</feature>
<feature type="turn" evidence="37">
    <location>
        <begin position="404"/>
        <end position="408"/>
    </location>
</feature>
<feature type="helix" evidence="37">
    <location>
        <begin position="409"/>
        <end position="412"/>
    </location>
</feature>
<feature type="turn" evidence="37">
    <location>
        <begin position="413"/>
        <end position="415"/>
    </location>
</feature>
<feature type="strand" evidence="37">
    <location>
        <begin position="419"/>
        <end position="426"/>
    </location>
</feature>
<feature type="helix" evidence="37">
    <location>
        <begin position="435"/>
        <end position="439"/>
    </location>
</feature>
<feature type="strand" evidence="37">
    <location>
        <begin position="441"/>
        <end position="443"/>
    </location>
</feature>
<feature type="helix" evidence="37">
    <location>
        <begin position="449"/>
        <end position="457"/>
    </location>
</feature>
<feature type="strand" evidence="37">
    <location>
        <begin position="461"/>
        <end position="469"/>
    </location>
</feature>
<feature type="helix" evidence="37">
    <location>
        <begin position="470"/>
        <end position="473"/>
    </location>
</feature>
<feature type="turn" evidence="37">
    <location>
        <begin position="476"/>
        <end position="478"/>
    </location>
</feature>
<feature type="helix" evidence="37">
    <location>
        <begin position="482"/>
        <end position="499"/>
    </location>
</feature>
<feature type="helix" evidence="37">
    <location>
        <begin position="502"/>
        <end position="504"/>
    </location>
</feature>
<feature type="strand" evidence="37">
    <location>
        <begin position="513"/>
        <end position="517"/>
    </location>
</feature>
<feature type="strand" evidence="37">
    <location>
        <begin position="520"/>
        <end position="524"/>
    </location>
</feature>
<feature type="helix" evidence="37">
    <location>
        <begin position="532"/>
        <end position="534"/>
    </location>
</feature>
<feature type="strand" evidence="37">
    <location>
        <begin position="536"/>
        <end position="541"/>
    </location>
</feature>
<feature type="strand" evidence="37">
    <location>
        <begin position="557"/>
        <end position="563"/>
    </location>
</feature>
<feature type="turn" evidence="38">
    <location>
        <begin position="573"/>
        <end position="575"/>
    </location>
</feature>
<feature type="strand" evidence="37">
    <location>
        <begin position="584"/>
        <end position="588"/>
    </location>
</feature>
<protein>
    <recommendedName>
        <fullName evidence="26">Complement component C8 beta chain</fullName>
    </recommendedName>
    <alternativeName>
        <fullName evidence="26">Complement component 8 subunit beta</fullName>
    </alternativeName>
</protein>
<reference key="1">
    <citation type="journal article" date="1987" name="Biochemistry">
        <title>Complementary DNA and derived amino acid sequence of the beta subunit of human complement protein C8: identification of a close structural and ancestral relationship to the alpha subunit and C9.</title>
        <authorList>
            <person name="Howard O.M.Z."/>
            <person name="Rao A.G."/>
            <person name="Sodetz J.M."/>
        </authorList>
    </citation>
    <scope>NUCLEOTIDE SEQUENCE [MRNA]</scope>
    <scope>PARTIAL PROTEIN SEQUENCE</scope>
    <scope>SUBCELLULAR LOCATION</scope>
    <scope>GLYCOSYLATION</scope>
    <source>
        <tissue>Liver</tissue>
    </source>
</reference>
<reference key="2">
    <citation type="submission" date="1988-06" db="EMBL/GenBank/DDBJ databases">
        <authorList>
            <person name="Sodetz J.M."/>
        </authorList>
    </citation>
    <scope>SEQUENCE REVISION</scope>
</reference>
<reference key="3">
    <citation type="journal article" date="2004" name="Nat. Genet.">
        <title>Complete sequencing and characterization of 21,243 full-length human cDNAs.</title>
        <authorList>
            <person name="Ota T."/>
            <person name="Suzuki Y."/>
            <person name="Nishikawa T."/>
            <person name="Otsuki T."/>
            <person name="Sugiyama T."/>
            <person name="Irie R."/>
            <person name="Wakamatsu A."/>
            <person name="Hayashi K."/>
            <person name="Sato H."/>
            <person name="Nagai K."/>
            <person name="Kimura K."/>
            <person name="Makita H."/>
            <person name="Sekine M."/>
            <person name="Obayashi M."/>
            <person name="Nishi T."/>
            <person name="Shibahara T."/>
            <person name="Tanaka T."/>
            <person name="Ishii S."/>
            <person name="Yamamoto J."/>
            <person name="Saito K."/>
            <person name="Kawai Y."/>
            <person name="Isono Y."/>
            <person name="Nakamura Y."/>
            <person name="Nagahari K."/>
            <person name="Murakami K."/>
            <person name="Yasuda T."/>
            <person name="Iwayanagi T."/>
            <person name="Wagatsuma M."/>
            <person name="Shiratori A."/>
            <person name="Sudo H."/>
            <person name="Hosoiri T."/>
            <person name="Kaku Y."/>
            <person name="Kodaira H."/>
            <person name="Kondo H."/>
            <person name="Sugawara M."/>
            <person name="Takahashi M."/>
            <person name="Kanda K."/>
            <person name="Yokoi T."/>
            <person name="Furuya T."/>
            <person name="Kikkawa E."/>
            <person name="Omura Y."/>
            <person name="Abe K."/>
            <person name="Kamihara K."/>
            <person name="Katsuta N."/>
            <person name="Sato K."/>
            <person name="Tanikawa M."/>
            <person name="Yamazaki M."/>
            <person name="Ninomiya K."/>
            <person name="Ishibashi T."/>
            <person name="Yamashita H."/>
            <person name="Murakawa K."/>
            <person name="Fujimori K."/>
            <person name="Tanai H."/>
            <person name="Kimata M."/>
            <person name="Watanabe M."/>
            <person name="Hiraoka S."/>
            <person name="Chiba Y."/>
            <person name="Ishida S."/>
            <person name="Ono Y."/>
            <person name="Takiguchi S."/>
            <person name="Watanabe S."/>
            <person name="Yosida M."/>
            <person name="Hotuta T."/>
            <person name="Kusano J."/>
            <person name="Kanehori K."/>
            <person name="Takahashi-Fujii A."/>
            <person name="Hara H."/>
            <person name="Tanase T.-O."/>
            <person name="Nomura Y."/>
            <person name="Togiya S."/>
            <person name="Komai F."/>
            <person name="Hara R."/>
            <person name="Takeuchi K."/>
            <person name="Arita M."/>
            <person name="Imose N."/>
            <person name="Musashino K."/>
            <person name="Yuuki H."/>
            <person name="Oshima A."/>
            <person name="Sasaki N."/>
            <person name="Aotsuka S."/>
            <person name="Yoshikawa Y."/>
            <person name="Matsunawa H."/>
            <person name="Ichihara T."/>
            <person name="Shiohata N."/>
            <person name="Sano S."/>
            <person name="Moriya S."/>
            <person name="Momiyama H."/>
            <person name="Satoh N."/>
            <person name="Takami S."/>
            <person name="Terashima Y."/>
            <person name="Suzuki O."/>
            <person name="Nakagawa S."/>
            <person name="Senoh A."/>
            <person name="Mizoguchi H."/>
            <person name="Goto Y."/>
            <person name="Shimizu F."/>
            <person name="Wakebe H."/>
            <person name="Hishigaki H."/>
            <person name="Watanabe T."/>
            <person name="Sugiyama A."/>
            <person name="Takemoto M."/>
            <person name="Kawakami B."/>
            <person name="Yamazaki M."/>
            <person name="Watanabe K."/>
            <person name="Kumagai A."/>
            <person name="Itakura S."/>
            <person name="Fukuzumi Y."/>
            <person name="Fujimori Y."/>
            <person name="Komiyama M."/>
            <person name="Tashiro H."/>
            <person name="Tanigami A."/>
            <person name="Fujiwara T."/>
            <person name="Ono T."/>
            <person name="Yamada K."/>
            <person name="Fujii Y."/>
            <person name="Ozaki K."/>
            <person name="Hirao M."/>
            <person name="Ohmori Y."/>
            <person name="Kawabata A."/>
            <person name="Hikiji T."/>
            <person name="Kobatake N."/>
            <person name="Inagaki H."/>
            <person name="Ikema Y."/>
            <person name="Okamoto S."/>
            <person name="Okitani R."/>
            <person name="Kawakami T."/>
            <person name="Noguchi S."/>
            <person name="Itoh T."/>
            <person name="Shigeta K."/>
            <person name="Senba T."/>
            <person name="Matsumura K."/>
            <person name="Nakajima Y."/>
            <person name="Mizuno T."/>
            <person name="Morinaga M."/>
            <person name="Sasaki M."/>
            <person name="Togashi T."/>
            <person name="Oyama M."/>
            <person name="Hata H."/>
            <person name="Watanabe M."/>
            <person name="Komatsu T."/>
            <person name="Mizushima-Sugano J."/>
            <person name="Satoh T."/>
            <person name="Shirai Y."/>
            <person name="Takahashi Y."/>
            <person name="Nakagawa K."/>
            <person name="Okumura K."/>
            <person name="Nagase T."/>
            <person name="Nomura N."/>
            <person name="Kikuchi H."/>
            <person name="Masuho Y."/>
            <person name="Yamashita R."/>
            <person name="Nakai K."/>
            <person name="Yada T."/>
            <person name="Nakamura Y."/>
            <person name="Ohara O."/>
            <person name="Isogai T."/>
            <person name="Sugano S."/>
        </authorList>
    </citation>
    <scope>NUCLEOTIDE SEQUENCE [LARGE SCALE MRNA]</scope>
    <scope>VARIANT ARG-117</scope>
    <source>
        <tissue>Liver</tissue>
    </source>
</reference>
<reference key="4">
    <citation type="journal article" date="2006" name="Nature">
        <title>The DNA sequence and biological annotation of human chromosome 1.</title>
        <authorList>
            <person name="Gregory S.G."/>
            <person name="Barlow K.F."/>
            <person name="McLay K.E."/>
            <person name="Kaul R."/>
            <person name="Swarbreck D."/>
            <person name="Dunham A."/>
            <person name="Scott C.E."/>
            <person name="Howe K.L."/>
            <person name="Woodfine K."/>
            <person name="Spencer C.C.A."/>
            <person name="Jones M.C."/>
            <person name="Gillson C."/>
            <person name="Searle S."/>
            <person name="Zhou Y."/>
            <person name="Kokocinski F."/>
            <person name="McDonald L."/>
            <person name="Evans R."/>
            <person name="Phillips K."/>
            <person name="Atkinson A."/>
            <person name="Cooper R."/>
            <person name="Jones C."/>
            <person name="Hall R.E."/>
            <person name="Andrews T.D."/>
            <person name="Lloyd C."/>
            <person name="Ainscough R."/>
            <person name="Almeida J.P."/>
            <person name="Ambrose K.D."/>
            <person name="Anderson F."/>
            <person name="Andrew R.W."/>
            <person name="Ashwell R.I.S."/>
            <person name="Aubin K."/>
            <person name="Babbage A.K."/>
            <person name="Bagguley C.L."/>
            <person name="Bailey J."/>
            <person name="Beasley H."/>
            <person name="Bethel G."/>
            <person name="Bird C.P."/>
            <person name="Bray-Allen S."/>
            <person name="Brown J.Y."/>
            <person name="Brown A.J."/>
            <person name="Buckley D."/>
            <person name="Burton J."/>
            <person name="Bye J."/>
            <person name="Carder C."/>
            <person name="Chapman J.C."/>
            <person name="Clark S.Y."/>
            <person name="Clarke G."/>
            <person name="Clee C."/>
            <person name="Cobley V."/>
            <person name="Collier R.E."/>
            <person name="Corby N."/>
            <person name="Coville G.J."/>
            <person name="Davies J."/>
            <person name="Deadman R."/>
            <person name="Dunn M."/>
            <person name="Earthrowl M."/>
            <person name="Ellington A.G."/>
            <person name="Errington H."/>
            <person name="Frankish A."/>
            <person name="Frankland J."/>
            <person name="French L."/>
            <person name="Garner P."/>
            <person name="Garnett J."/>
            <person name="Gay L."/>
            <person name="Ghori M.R.J."/>
            <person name="Gibson R."/>
            <person name="Gilby L.M."/>
            <person name="Gillett W."/>
            <person name="Glithero R.J."/>
            <person name="Grafham D.V."/>
            <person name="Griffiths C."/>
            <person name="Griffiths-Jones S."/>
            <person name="Grocock R."/>
            <person name="Hammond S."/>
            <person name="Harrison E.S.I."/>
            <person name="Hart E."/>
            <person name="Haugen E."/>
            <person name="Heath P.D."/>
            <person name="Holmes S."/>
            <person name="Holt K."/>
            <person name="Howden P.J."/>
            <person name="Hunt A.R."/>
            <person name="Hunt S.E."/>
            <person name="Hunter G."/>
            <person name="Isherwood J."/>
            <person name="James R."/>
            <person name="Johnson C."/>
            <person name="Johnson D."/>
            <person name="Joy A."/>
            <person name="Kay M."/>
            <person name="Kershaw J.K."/>
            <person name="Kibukawa M."/>
            <person name="Kimberley A.M."/>
            <person name="King A."/>
            <person name="Knights A.J."/>
            <person name="Lad H."/>
            <person name="Laird G."/>
            <person name="Lawlor S."/>
            <person name="Leongamornlert D.A."/>
            <person name="Lloyd D.M."/>
            <person name="Loveland J."/>
            <person name="Lovell J."/>
            <person name="Lush M.J."/>
            <person name="Lyne R."/>
            <person name="Martin S."/>
            <person name="Mashreghi-Mohammadi M."/>
            <person name="Matthews L."/>
            <person name="Matthews N.S.W."/>
            <person name="McLaren S."/>
            <person name="Milne S."/>
            <person name="Mistry S."/>
            <person name="Moore M.J.F."/>
            <person name="Nickerson T."/>
            <person name="O'Dell C.N."/>
            <person name="Oliver K."/>
            <person name="Palmeiri A."/>
            <person name="Palmer S.A."/>
            <person name="Parker A."/>
            <person name="Patel D."/>
            <person name="Pearce A.V."/>
            <person name="Peck A.I."/>
            <person name="Pelan S."/>
            <person name="Phelps K."/>
            <person name="Phillimore B.J."/>
            <person name="Plumb R."/>
            <person name="Rajan J."/>
            <person name="Raymond C."/>
            <person name="Rouse G."/>
            <person name="Saenphimmachak C."/>
            <person name="Sehra H.K."/>
            <person name="Sheridan E."/>
            <person name="Shownkeen R."/>
            <person name="Sims S."/>
            <person name="Skuce C.D."/>
            <person name="Smith M."/>
            <person name="Steward C."/>
            <person name="Subramanian S."/>
            <person name="Sycamore N."/>
            <person name="Tracey A."/>
            <person name="Tromans A."/>
            <person name="Van Helmond Z."/>
            <person name="Wall M."/>
            <person name="Wallis J.M."/>
            <person name="White S."/>
            <person name="Whitehead S.L."/>
            <person name="Wilkinson J.E."/>
            <person name="Willey D.L."/>
            <person name="Williams H."/>
            <person name="Wilming L."/>
            <person name="Wray P.W."/>
            <person name="Wu Z."/>
            <person name="Coulson A."/>
            <person name="Vaudin M."/>
            <person name="Sulston J.E."/>
            <person name="Durbin R.M."/>
            <person name="Hubbard T."/>
            <person name="Wooster R."/>
            <person name="Dunham I."/>
            <person name="Carter N.P."/>
            <person name="McVean G."/>
            <person name="Ross M.T."/>
            <person name="Harrow J."/>
            <person name="Olson M.V."/>
            <person name="Beck S."/>
            <person name="Rogers J."/>
            <person name="Bentley D.R."/>
        </authorList>
    </citation>
    <scope>NUCLEOTIDE SEQUENCE [LARGE SCALE GENOMIC DNA]</scope>
</reference>
<reference key="5">
    <citation type="submission" date="2005-09" db="EMBL/GenBank/DDBJ databases">
        <authorList>
            <person name="Mural R.J."/>
            <person name="Istrail S."/>
            <person name="Sutton G."/>
            <person name="Florea L."/>
            <person name="Halpern A.L."/>
            <person name="Mobarry C.M."/>
            <person name="Lippert R."/>
            <person name="Walenz B."/>
            <person name="Shatkay H."/>
            <person name="Dew I."/>
            <person name="Miller J.R."/>
            <person name="Flanigan M.J."/>
            <person name="Edwards N.J."/>
            <person name="Bolanos R."/>
            <person name="Fasulo D."/>
            <person name="Halldorsson B.V."/>
            <person name="Hannenhalli S."/>
            <person name="Turner R."/>
            <person name="Yooseph S."/>
            <person name="Lu F."/>
            <person name="Nusskern D.R."/>
            <person name="Shue B.C."/>
            <person name="Zheng X.H."/>
            <person name="Zhong F."/>
            <person name="Delcher A.L."/>
            <person name="Huson D.H."/>
            <person name="Kravitz S.A."/>
            <person name="Mouchard L."/>
            <person name="Reinert K."/>
            <person name="Remington K.A."/>
            <person name="Clark A.G."/>
            <person name="Waterman M.S."/>
            <person name="Eichler E.E."/>
            <person name="Adams M.D."/>
            <person name="Hunkapiller M.W."/>
            <person name="Myers E.W."/>
            <person name="Venter J.C."/>
        </authorList>
    </citation>
    <scope>NUCLEOTIDE SEQUENCE [LARGE SCALE GENOMIC DNA]</scope>
    <scope>VARIANT ARG-117</scope>
</reference>
<reference key="6">
    <citation type="journal article" date="2004" name="Genome Res.">
        <title>The status, quality, and expansion of the NIH full-length cDNA project: the Mammalian Gene Collection (MGC).</title>
        <authorList>
            <consortium name="The MGC Project Team"/>
        </authorList>
    </citation>
    <scope>NUCLEOTIDE SEQUENCE [LARGE SCALE MRNA]</scope>
</reference>
<reference key="7">
    <citation type="journal article" date="1987" name="Biochemistry">
        <title>Complementary DNA cloning of complement C8 beta and its sequence homology to C9.</title>
        <authorList>
            <person name="Haefliger J.-A."/>
            <person name="Tschopp J."/>
            <person name="Nardelli D."/>
            <person name="Wahli W."/>
            <person name="Kocher H.-P."/>
            <person name="Tosi M."/>
            <person name="Stanley K.K."/>
        </authorList>
    </citation>
    <scope>NUCLEOTIDE SEQUENCE [MRNA] OF 47-591</scope>
    <scope>PROTEIN SEQUENCE OF 55-68</scope>
    <source>
        <tissue>Liver</tissue>
    </source>
</reference>
<reference key="8">
    <citation type="journal article" date="1980" name="J. Biol. Chem.">
        <title>The eighth component of human complement. Purification and physicochemical characterization of its unusual subunit structure.</title>
        <authorList>
            <person name="Steckel E.W."/>
            <person name="York R.G."/>
            <person name="Monahan J.B."/>
            <person name="Sodetz J.M."/>
        </authorList>
    </citation>
    <scope>PARTIAL PROTEIN SEQUENCE</scope>
    <scope>FUNCTION</scope>
    <scope>SUBCELLULAR LOCATION</scope>
    <scope>SUBUNIT</scope>
</reference>
<reference key="9">
    <citation type="journal article" date="1983" name="J. Biol. Chem.">
        <title>Evidence of direct insertion of terminal complement proteins into cell membrane bilayers during cytolysis. Labeling by a photosensitive membrane probe reveals a major role for the eighth and ninth components.</title>
        <authorList>
            <person name="Steckel E.W."/>
            <person name="Welbaum B.E."/>
            <person name="Sodetz J.M."/>
        </authorList>
    </citation>
    <scope>FUNCTION</scope>
</reference>
<reference key="10">
    <citation type="journal article" date="1999" name="J. Biol. Chem.">
        <title>The four terminal components of the complement system are C-mannosylated on multiple tryptophan residues.</title>
        <authorList>
            <person name="Hofsteenge J."/>
            <person name="Blommers M."/>
            <person name="Hess D."/>
            <person name="Furmanek A."/>
            <person name="Miroshnichenko O."/>
        </authorList>
    </citation>
    <scope>GLYCOSYLATION AT TRP-70; TRP-73; TRP-551 AND TRP-554</scope>
</reference>
<reference key="11">
    <citation type="journal article" date="2005" name="J. Proteome Res.">
        <title>Human plasma N-glycoproteome analysis by immunoaffinity subtraction, hydrazide chemistry, and mass spectrometry.</title>
        <authorList>
            <person name="Liu T."/>
            <person name="Qian W.-J."/>
            <person name="Gritsenko M.A."/>
            <person name="Camp D.G. II"/>
            <person name="Monroe M.E."/>
            <person name="Moore R.J."/>
            <person name="Smith R.D."/>
        </authorList>
    </citation>
    <scope>GLYCOSYLATION [LARGE SCALE ANALYSIS] AT ASN-243</scope>
    <source>
        <tissue>Plasma</tissue>
    </source>
</reference>
<reference key="12">
    <citation type="journal article" date="2009" name="J. Proteome Res.">
        <title>Glycoproteomics analysis of human liver tissue by combination of multiple enzyme digestion and hydrazide chemistry.</title>
        <authorList>
            <person name="Chen R."/>
            <person name="Jiang X."/>
            <person name="Sun D."/>
            <person name="Han G."/>
            <person name="Wang F."/>
            <person name="Ye M."/>
            <person name="Wang L."/>
            <person name="Zou H."/>
        </authorList>
    </citation>
    <scope>GLYCOSYLATION [LARGE SCALE ANALYSIS] AT ASN-243</scope>
    <source>
        <tissue>Liver</tissue>
    </source>
</reference>
<reference key="13">
    <citation type="journal article" date="2012" name="Cell Rep.">
        <title>Assembly and regulation of the membrane attack complex based on structures of C5b6 and sC5b9.</title>
        <authorList>
            <person name="Hadders M.A."/>
            <person name="Bubeck D."/>
            <person name="Roversi P."/>
            <person name="Hakobyan S."/>
            <person name="Forneris F."/>
            <person name="Morgan B.P."/>
            <person name="Pangburn M.K."/>
            <person name="Llorca O."/>
            <person name="Lea S.M."/>
            <person name="Gros P."/>
        </authorList>
    </citation>
    <scope>FUNCTION</scope>
    <scope>SUBUNIT</scope>
</reference>
<reference key="14">
    <citation type="journal article" date="2014" name="J. Proteomics">
        <title>An enzyme assisted RP-RPLC approach for in-depth analysis of human liver phosphoproteome.</title>
        <authorList>
            <person name="Bian Y."/>
            <person name="Song C."/>
            <person name="Cheng K."/>
            <person name="Dong M."/>
            <person name="Wang F."/>
            <person name="Huang J."/>
            <person name="Sun D."/>
            <person name="Wang L."/>
            <person name="Ye M."/>
            <person name="Zou H."/>
        </authorList>
    </citation>
    <scope>IDENTIFICATION BY MASS SPECTROMETRY [LARGE SCALE ANALYSIS]</scope>
    <source>
        <tissue>Liver</tissue>
    </source>
</reference>
<reference key="15">
    <citation type="journal article" date="2016" name="Cell Rep.">
        <title>Heterogeneous MAC initiator and pore structures in a lipid bilayer by phase-plate cryo-electron tomography.</title>
        <authorList>
            <person name="Sharp T.H."/>
            <person name="Koster A.J."/>
            <person name="Gros P."/>
        </authorList>
    </citation>
    <scope>FUNCTION</scope>
    <scope>SUBUNIT</scope>
</reference>
<reference key="16">
    <citation type="journal article" date="2016" name="Nat. Commun.">
        <title>Structural basis of complement membrane attack complex formation.</title>
        <authorList>
            <person name="Serna M."/>
            <person name="Giles J.L."/>
            <person name="Morgan B.P."/>
            <person name="Bubeck D."/>
        </authorList>
    </citation>
    <scope>FUNCTION</scope>
    <scope>SUBUNIT</scope>
</reference>
<reference key="17">
    <citation type="journal article" date="2019" name="Nat. Commun.">
        <title>Single-molecule kinetics of pore assembly by the membrane attack complex.</title>
        <authorList>
            <person name="Parsons E.S."/>
            <person name="Stanley G.J."/>
            <person name="Pyne A.L.B."/>
            <person name="Hodel A.W."/>
            <person name="Nievergelt A.P."/>
            <person name="Menny A."/>
            <person name="Yon A.R."/>
            <person name="Rowley A."/>
            <person name="Richter R.P."/>
            <person name="Fantner G.E."/>
            <person name="Bubeck D."/>
            <person name="Hoogenboom B.W."/>
        </authorList>
    </citation>
    <scope>FUNCTION</scope>
    <scope>SUBUNIT</scope>
</reference>
<reference evidence="29" key="18">
    <citation type="journal article" date="2011" name="J. Biol. Chem.">
        <title>Structure of human C8 protein provides mechanistic insight into membrane pore formation by complement.</title>
        <authorList>
            <person name="Lovelace L.L."/>
            <person name="Cooper C.L."/>
            <person name="Sodetz J.M."/>
            <person name="Lebioda L."/>
        </authorList>
    </citation>
    <scope>X-RAY CRYSTALLOGRAPHY (2.51 ANGSTROMS) OF 55-591 IN COMPLEX WITH CALCIUM; C8A AND C8G</scope>
    <scope>PHOSPHORYLATION AT THR-418</scope>
    <scope>SUBUNIT</scope>
    <scope>DISULFIDE BONDS</scope>
</reference>
<reference evidence="30 31" key="19">
    <citation type="journal article" date="2018" name="Nat. Commun.">
        <title>CryoEM reveals how the complement membrane attack complex ruptures lipid bilayers.</title>
        <authorList>
            <person name="Menny A."/>
            <person name="Serna M."/>
            <person name="Boyd C.M."/>
            <person name="Gardner S."/>
            <person name="Joseph A.P."/>
            <person name="Morgan B.P."/>
            <person name="Topf M."/>
            <person name="Brooks N.J."/>
            <person name="Bubeck D."/>
        </authorList>
    </citation>
    <scope>STRUCTURE BY ELECTRON MICROSCOPY (5.60 ANGSTROMS) OF 55-591 OF MEMBRANE ATTACK COMPLEX</scope>
    <scope>DISULFIDE BONDS</scope>
    <scope>FUNCTION</scope>
    <scope>SUBCELLULAR LOCATION</scope>
    <scope>SUBUNIT</scope>
    <scope>GLYCOSYLATION AT ASN-243</scope>
</reference>
<reference evidence="32 33" key="20">
    <citation type="journal article" date="2021" name="Nat. Commun.">
        <title>Structural basis of soluble membrane attack complex packaging for clearance.</title>
        <authorList>
            <person name="Menny A."/>
            <person name="Lukassen M.V."/>
            <person name="Couves E.C."/>
            <person name="Franc V."/>
            <person name="Heck A.J.R."/>
            <person name="Bubeck D."/>
        </authorList>
    </citation>
    <scope>STRUCTURE BY ELECTRON MICROSCOPY (3.27 ANGSTROMS) OF 55-591 OF MEMBRANE ATTACK COMPLEX</scope>
    <scope>ACTIVITY REGULATION</scope>
</reference>
<reference evidence="34 35 36" key="21">
    <citation type="journal article" date="2023" name="Nat. Commun.">
        <title>Structural basis for membrane attack complex inhibition by CD59.</title>
        <authorList>
            <person name="Couves E.C."/>
            <person name="Gardner S."/>
            <person name="Voisin T.B."/>
            <person name="Bickel J.K."/>
            <person name="Stansfeld P.J."/>
            <person name="Tate E.W."/>
            <person name="Bubeck D."/>
        </authorList>
    </citation>
    <scope>STRUCTURE BY ELECTRON MICROSCOPY (3.00 ANGSTROMS) IN COMPLEX WITH THE MEMBRANE ATTACK COMPLEX</scope>
    <scope>ACTIVITY REGULATION</scope>
</reference>
<reference key="22">
    <citation type="journal article" date="1993" name="J. Immunol.">
        <title>Genetic basis of human complement C8 beta deficiency.</title>
        <authorList>
            <person name="Kaufmann T."/>
            <person name="Haensch G."/>
            <person name="Rittner C."/>
            <person name="Spaeth P."/>
            <person name="Tedesco F."/>
            <person name="Schneider P.M."/>
        </authorList>
    </citation>
    <scope>INVOLVEMENT IN C8D2</scope>
    <scope>VARIANT C8D2 428-ARG--SER-591 DEL</scope>
</reference>
<reference key="23">
    <citation type="journal article" date="1994" name="FEBS Lett.">
        <title>Human complement component C8. Molecular basis of the beta-chain polymorphism.</title>
        <authorList>
            <person name="Dewald G."/>
            <person name="Hemmer S."/>
            <person name="Noethen M.M."/>
        </authorList>
    </citation>
    <scope>DEFINITION OF ALLOTYPES C8B A AND C8B B</scope>
</reference>
<reference key="24">
    <citation type="journal article" date="1995" name="J. Immunol.">
        <title>Delineation of additional genetic bases for C8 beta deficiency. Prevalence of null alleles and predominance of C--&gt;T transition in their genesis.</title>
        <authorList>
            <person name="Saucedo L."/>
            <person name="Ackermann L."/>
            <person name="Platonov A.E."/>
            <person name="Gewurz A."/>
            <person name="Rakita R.M."/>
            <person name="Densen P."/>
        </authorList>
    </citation>
    <scope>VARIANTS C8D2 91-GLN--SER-591 DEL; 121-ARG--SER-591 DEL AND 274-ARG--SER-591 DEL</scope>
</reference>
<reference key="25">
    <citation type="journal article" date="2009" name="J. Clin. Immunol.">
        <title>A novel mutation in a patient with a deficiency of the eighth component of complement associated with recurrent meningococcal meningitis.</title>
        <authorList>
            <person name="Arnold D.F."/>
            <person name="Roberts A.G."/>
            <person name="Thomas A."/>
            <person name="Ferry B."/>
            <person name="Morgan B.P."/>
            <person name="Chapel H."/>
        </authorList>
    </citation>
    <scope>INVOLVEMENT IN C8D2</scope>
</reference>
<organism>
    <name type="scientific">Homo sapiens</name>
    <name type="common">Human</name>
    <dbReference type="NCBI Taxonomy" id="9606"/>
    <lineage>
        <taxon>Eukaryota</taxon>
        <taxon>Metazoa</taxon>
        <taxon>Chordata</taxon>
        <taxon>Craniata</taxon>
        <taxon>Vertebrata</taxon>
        <taxon>Euteleostomi</taxon>
        <taxon>Mammalia</taxon>
        <taxon>Eutheria</taxon>
        <taxon>Euarchontoglires</taxon>
        <taxon>Primates</taxon>
        <taxon>Haplorrhini</taxon>
        <taxon>Catarrhini</taxon>
        <taxon>Hominidae</taxon>
        <taxon>Homo</taxon>
    </lineage>
</organism>
<evidence type="ECO:0000255" key="1"/>
<evidence type="ECO:0000255" key="2">
    <source>
        <dbReference type="PROSITE-ProRule" id="PRU00124"/>
    </source>
</evidence>
<evidence type="ECO:0000255" key="3">
    <source>
        <dbReference type="PROSITE-ProRule" id="PRU00210"/>
    </source>
</evidence>
<evidence type="ECO:0000255" key="4">
    <source>
        <dbReference type="PROSITE-ProRule" id="PRU00745"/>
    </source>
</evidence>
<evidence type="ECO:0000256" key="5">
    <source>
        <dbReference type="SAM" id="MobiDB-lite"/>
    </source>
</evidence>
<evidence type="ECO:0000269" key="6">
    <source>
    </source>
</evidence>
<evidence type="ECO:0000269" key="7">
    <source>
    </source>
</evidence>
<evidence type="ECO:0000269" key="8">
    <source>
    </source>
</evidence>
<evidence type="ECO:0000269" key="9">
    <source>
    </source>
</evidence>
<evidence type="ECO:0000269" key="10">
    <source>
    </source>
</evidence>
<evidence type="ECO:0000269" key="11">
    <source>
    </source>
</evidence>
<evidence type="ECO:0000269" key="12">
    <source>
    </source>
</evidence>
<evidence type="ECO:0000269" key="13">
    <source>
    </source>
</evidence>
<evidence type="ECO:0000269" key="14">
    <source>
    </source>
</evidence>
<evidence type="ECO:0000269" key="15">
    <source>
    </source>
</evidence>
<evidence type="ECO:0000269" key="16">
    <source>
    </source>
</evidence>
<evidence type="ECO:0000269" key="17">
    <source>
    </source>
</evidence>
<evidence type="ECO:0000269" key="18">
    <source>
    </source>
</evidence>
<evidence type="ECO:0000269" key="19">
    <source>
    </source>
</evidence>
<evidence type="ECO:0000269" key="20">
    <source>
    </source>
</evidence>
<evidence type="ECO:0000269" key="21">
    <source>
    </source>
</evidence>
<evidence type="ECO:0000269" key="22">
    <source>
    </source>
</evidence>
<evidence type="ECO:0000269" key="23">
    <source>
    </source>
</evidence>
<evidence type="ECO:0000269" key="24">
    <source>
    </source>
</evidence>
<evidence type="ECO:0000269" key="25">
    <source>
    </source>
</evidence>
<evidence type="ECO:0000303" key="26">
    <source>
    </source>
</evidence>
<evidence type="ECO:0000305" key="27"/>
<evidence type="ECO:0000312" key="28">
    <source>
        <dbReference type="HGNC" id="HGNC:1353"/>
    </source>
</evidence>
<evidence type="ECO:0007744" key="29">
    <source>
        <dbReference type="PDB" id="3OJY"/>
    </source>
</evidence>
<evidence type="ECO:0007744" key="30">
    <source>
        <dbReference type="PDB" id="6H03"/>
    </source>
</evidence>
<evidence type="ECO:0007744" key="31">
    <source>
        <dbReference type="PDB" id="6H04"/>
    </source>
</evidence>
<evidence type="ECO:0007744" key="32">
    <source>
        <dbReference type="PDB" id="7NYC"/>
    </source>
</evidence>
<evidence type="ECO:0007744" key="33">
    <source>
        <dbReference type="PDB" id="7NYD"/>
    </source>
</evidence>
<evidence type="ECO:0007744" key="34">
    <source>
        <dbReference type="PDB" id="8B0F"/>
    </source>
</evidence>
<evidence type="ECO:0007744" key="35">
    <source>
        <dbReference type="PDB" id="8B0G"/>
    </source>
</evidence>
<evidence type="ECO:0007744" key="36">
    <source>
        <dbReference type="PDB" id="8B0H"/>
    </source>
</evidence>
<evidence type="ECO:0007829" key="37">
    <source>
        <dbReference type="PDB" id="3OJY"/>
    </source>
</evidence>
<evidence type="ECO:0007829" key="38">
    <source>
        <dbReference type="PDB" id="7NYD"/>
    </source>
</evidence>
<gene>
    <name evidence="28" type="primary">C8B</name>
</gene>
<comment type="function">
    <text evidence="12 13 14 16 21 22">Component of the membrane attack complex (MAC), a multiprotein complex activated by the complement cascade, which inserts into a target cell membrane and forms a pore, leading to target cell membrane rupture and cell lysis (PubMed:22832194, PubMed:26841837, PubMed:27052168, PubMed:30552328, PubMed:7440581). The MAC is initiated by proteolytic cleavage of C5 into complement C5b in response to the classical, alternative, lectin and GZMK complement pathways (PubMed:30552328, PubMed:7440581). The complement pathways consist in a cascade of proteins that leads to phagocytosis and breakdown of pathogens and signaling that strengthens the adaptive immune system (PubMed:30552328, PubMed:7440581). C8B, together with C8A and C8G, inserts into the target membrane, but does not form pores by itself (PubMed:30552328). During MAC assembly, associates with C5b, C6 and C7 to form the C5b8 intermediate complex that inserts into the target membrane and traverses the bilayer increasing membrane rigidity (PubMed:30552328, PubMed:6833260).</text>
</comment>
<comment type="activity regulation">
    <text evidence="18 20">Membrane attack complex (MAC) assembly is inhibited by CD59, thereby protecting self-cells from damage during complement activation (PubMed:36797260). CD59 acts by binding to the beta-haipins of C8 (C8A and C8B), forming an intermolecular beta-sheet that prevents incorporation of the multiple copies of C9 required for complete formation of the osmolytic pore (PubMed:36797260). MAC assembly is also inhibited by clusterin (CLU) chaperones that inhibit polymerization of C9 (PubMed:34667172).</text>
</comment>
<comment type="subunit">
    <text evidence="11 12 13 14 16 17 22">Heterotrimer of 3 chains: alpha (C8A), beta (C8B) and gamma (C8G); the alpha and gamma chains are disulfide bonded (PubMed:21454577). Component of the membrane attack complex (MAC), composed of complement C5b, C6, C7, C8A, C8B, C8G and multiple copies of the pore-forming subunit C9 (PubMed:22832194, PubMed:26841837, PubMed:27052168, PubMed:30552328, PubMed:31061395, PubMed:7440581).</text>
</comment>
<comment type="subcellular location">
    <subcellularLocation>
        <location evidence="15 22">Secreted</location>
    </subcellularLocation>
    <subcellularLocation>
        <location evidence="16 17">Target cell membrane</location>
        <topology evidence="16">Multi-pass membrane protein</topology>
    </subcellularLocation>
    <text evidence="16 17">Secreted as soluble protein (PubMed:30552328). Inserts into the cell membrane of target cells (PubMed:30552328, PubMed:31061395).</text>
</comment>
<comment type="PTM">
    <text evidence="6 8 9 15">N-glycosylated; contains one or two bound glycans. Not O-glycosylated.</text>
</comment>
<comment type="polymorphism">
    <text evidence="25">The sequence shown is that of allotype C8B A.</text>
</comment>
<comment type="disease" evidence="10 23 24">
    <disease id="DI-01374">
        <name>Complement component 8 deficiency, 2</name>
        <acronym>C8D2</acronym>
        <description>A rare defect of the complement classical pathway associated with susceptibility to severe recurrent infections, predominantly by Neisseria gonorrhoeae or Neisseria meningitidis.</description>
        <dbReference type="MIM" id="613789"/>
    </disease>
    <text>Disease susceptibility is associated with variants affecting the gene represented in this entry.</text>
</comment>
<comment type="similarity">
    <text evidence="27">Belongs to the complement C6/C7/C8/C9 family.</text>
</comment>
<comment type="online information" name="C8Bbase">
    <link uri="https://databases.lovd.nl/shared/genes/C8B"/>
    <text>C8B mutation db</text>
</comment>
<sequence>MKNSRTWAWRAPVELFLLCAALGCLSLPGSRGERPHSFGSNAVNKSFAKSRQMRSVDVTLMPIDCELSSWSSWTTCDPCQKKRYRYAYLLQPSQFHGEPCNFSDKEVEDCVTNRPCGSQVRCEGFVCAQTGRCVNRRLLCNGDNDCGDQSDEANCRRIYKKCQHEMDQYWGIGSLASGINLFTNSFEGPVLDHRYYAGGCSPHYILNTRFRKPYNVESYTPQTQGKYEFILKEYESYSDFERNVTEKMASKSGFSFGFKIPGIFELGISSQSDRGKHYIRRTKRFSHTKSVFLHARSDLEVAHYKLKPRSLMLHYEFLQRVKRLPLEYSYGEYRDLFRDFGTHYITEAVLGGIYEYTLVMNKEAMERGDYTLNNVHACAKNDFKIGGAIEEVYVSLGVSVGKCRGILNEIKDRNKRDTMVEDLVVLVRGGASEHITTLAYQELPTADLMQEWGDAVQYNPAIIKVKVEPLYELVTATDFAYSSTVRQNMKQALEEFQKEVSSCHCAPCQGNGVPVLKGSRCDCICPVGSQGLACEVSYRKNTPIDGKWNCWSNWSSCSGRRKTRQRQCNNPPPQNGGSPCSGPASETLDCS</sequence>
<dbReference type="EMBL" id="M16973">
    <property type="protein sequence ID" value="AAA51862.1"/>
    <property type="molecule type" value="mRNA"/>
</dbReference>
<dbReference type="EMBL" id="AK313382">
    <property type="protein sequence ID" value="BAG36180.1"/>
    <property type="molecule type" value="mRNA"/>
</dbReference>
<dbReference type="EMBL" id="AL121998">
    <property type="status" value="NOT_ANNOTATED_CDS"/>
    <property type="molecule type" value="Genomic_DNA"/>
</dbReference>
<dbReference type="EMBL" id="CH471059">
    <property type="protein sequence ID" value="EAX06641.1"/>
    <property type="molecule type" value="Genomic_DNA"/>
</dbReference>
<dbReference type="EMBL" id="BC130575">
    <property type="protein sequence ID" value="AAI30576.1"/>
    <property type="molecule type" value="mRNA"/>
</dbReference>
<dbReference type="EMBL" id="X04393">
    <property type="protein sequence ID" value="CAA27981.1"/>
    <property type="molecule type" value="mRNA"/>
</dbReference>
<dbReference type="CCDS" id="CCDS30730.1"/>
<dbReference type="PIR" id="A43071">
    <property type="entry name" value="C8HUB"/>
</dbReference>
<dbReference type="RefSeq" id="NP_000057.3">
    <property type="nucleotide sequence ID" value="NM_000066.4"/>
</dbReference>
<dbReference type="RefSeq" id="XP_016857724.1">
    <property type="nucleotide sequence ID" value="XM_017002235.1"/>
</dbReference>
<dbReference type="PDB" id="3OJY">
    <property type="method" value="X-ray"/>
    <property type="resolution" value="2.51 A"/>
    <property type="chains" value="B=55-591"/>
</dbReference>
<dbReference type="PDB" id="6H03">
    <property type="method" value="EM"/>
    <property type="resolution" value="5.60 A"/>
    <property type="chains" value="C=55-591"/>
</dbReference>
<dbReference type="PDB" id="6H04">
    <property type="method" value="EM"/>
    <property type="resolution" value="5.60 A"/>
    <property type="chains" value="C=55-591"/>
</dbReference>
<dbReference type="PDB" id="7NYC">
    <property type="method" value="EM"/>
    <property type="resolution" value="3.50 A"/>
    <property type="chains" value="D=55-591"/>
</dbReference>
<dbReference type="PDB" id="7NYD">
    <property type="method" value="EM"/>
    <property type="resolution" value="3.30 A"/>
    <property type="chains" value="D=55-591"/>
</dbReference>
<dbReference type="PDB" id="8B0F">
    <property type="method" value="EM"/>
    <property type="resolution" value="3.00 A"/>
    <property type="chains" value="D=1-591"/>
</dbReference>
<dbReference type="PDB" id="8B0G">
    <property type="method" value="EM"/>
    <property type="resolution" value="3.30 A"/>
    <property type="chains" value="D=1-591"/>
</dbReference>
<dbReference type="PDB" id="8B0H">
    <property type="method" value="EM"/>
    <property type="resolution" value="3.30 A"/>
    <property type="chains" value="D=1-591"/>
</dbReference>
<dbReference type="PDBsum" id="3OJY"/>
<dbReference type="PDBsum" id="6H03"/>
<dbReference type="PDBsum" id="6H04"/>
<dbReference type="PDBsum" id="7NYC"/>
<dbReference type="PDBsum" id="7NYD"/>
<dbReference type="PDBsum" id="8B0F"/>
<dbReference type="PDBsum" id="8B0G"/>
<dbReference type="PDBsum" id="8B0H"/>
<dbReference type="EMDB" id="EMD-0106"/>
<dbReference type="EMDB" id="EMD-0107"/>
<dbReference type="EMDB" id="EMD-12649"/>
<dbReference type="EMDB" id="EMD-12650"/>
<dbReference type="EMDB" id="EMD-12651"/>
<dbReference type="EMDB" id="EMD-15779"/>
<dbReference type="EMDB" id="EMD-15780"/>
<dbReference type="EMDB" id="EMD-15781"/>
<dbReference type="EMDB" id="EMD-3289"/>
<dbReference type="SMR" id="P07358"/>
<dbReference type="BioGRID" id="107193">
    <property type="interactions" value="26"/>
</dbReference>
<dbReference type="ComplexPortal" id="CPX-6159">
    <property type="entry name" value="Membrane attack complex"/>
</dbReference>
<dbReference type="FunCoup" id="P07358">
    <property type="interactions" value="163"/>
</dbReference>
<dbReference type="IntAct" id="P07358">
    <property type="interactions" value="5"/>
</dbReference>
<dbReference type="STRING" id="9606.ENSP00000360281"/>
<dbReference type="DrugBank" id="DB09130">
    <property type="generic name" value="Copper"/>
</dbReference>
<dbReference type="DrugBank" id="DB01593">
    <property type="generic name" value="Zinc"/>
</dbReference>
<dbReference type="DrugBank" id="DB14487">
    <property type="generic name" value="Zinc acetate"/>
</dbReference>
<dbReference type="GlyConnect" id="1149">
    <property type="glycosylation" value="3 N-Linked glycans (1 site)"/>
</dbReference>
<dbReference type="GlyCosmos" id="P07358">
    <property type="glycosylation" value="6 sites, 3 glycans"/>
</dbReference>
<dbReference type="GlyGen" id="P07358">
    <property type="glycosylation" value="6 sites, 14 N-linked glycans (1 site)"/>
</dbReference>
<dbReference type="iPTMnet" id="P07358"/>
<dbReference type="PhosphoSitePlus" id="P07358"/>
<dbReference type="BioMuta" id="C8B"/>
<dbReference type="DMDM" id="20141201"/>
<dbReference type="jPOST" id="P07358"/>
<dbReference type="MassIVE" id="P07358"/>
<dbReference type="PaxDb" id="9606-ENSP00000360281"/>
<dbReference type="PeptideAtlas" id="P07358"/>
<dbReference type="ProteomicsDB" id="51998"/>
<dbReference type="Antibodypedia" id="19370">
    <property type="antibodies" value="204 antibodies from 27 providers"/>
</dbReference>
<dbReference type="DNASU" id="732"/>
<dbReference type="Ensembl" id="ENST00000371237.9">
    <property type="protein sequence ID" value="ENSP00000360281.4"/>
    <property type="gene ID" value="ENSG00000021852.14"/>
</dbReference>
<dbReference type="Ensembl" id="ENST00000696164.1">
    <property type="protein sequence ID" value="ENSP00000512454.1"/>
    <property type="gene ID" value="ENSG00000021852.14"/>
</dbReference>
<dbReference type="GeneID" id="732"/>
<dbReference type="KEGG" id="hsa:732"/>
<dbReference type="MANE-Select" id="ENST00000371237.9">
    <property type="protein sequence ID" value="ENSP00000360281.4"/>
    <property type="RefSeq nucleotide sequence ID" value="NM_000066.4"/>
    <property type="RefSeq protein sequence ID" value="NP_000057.3"/>
</dbReference>
<dbReference type="UCSC" id="uc001cyp.5">
    <property type="organism name" value="human"/>
</dbReference>
<dbReference type="AGR" id="HGNC:1353"/>
<dbReference type="CTD" id="732"/>
<dbReference type="DisGeNET" id="732"/>
<dbReference type="GeneCards" id="C8B"/>
<dbReference type="HGNC" id="HGNC:1353">
    <property type="gene designation" value="C8B"/>
</dbReference>
<dbReference type="HPA" id="ENSG00000021852">
    <property type="expression patterns" value="Tissue enriched (liver)"/>
</dbReference>
<dbReference type="MalaCards" id="C8B"/>
<dbReference type="MIM" id="120960">
    <property type="type" value="gene"/>
</dbReference>
<dbReference type="MIM" id="613789">
    <property type="type" value="phenotype"/>
</dbReference>
<dbReference type="neXtProt" id="NX_P07358"/>
<dbReference type="OpenTargets" id="ENSG00000021852"/>
<dbReference type="Orphanet" id="169150">
    <property type="disease" value="Immunodeficiency due to a late component of complement deficiency"/>
</dbReference>
<dbReference type="PharmGKB" id="PA25952"/>
<dbReference type="VEuPathDB" id="HostDB:ENSG00000021852"/>
<dbReference type="eggNOG" id="KOG3535">
    <property type="taxonomic scope" value="Eukaryota"/>
</dbReference>
<dbReference type="GeneTree" id="ENSGT00940000160247"/>
<dbReference type="InParanoid" id="P07358"/>
<dbReference type="OMA" id="KYYAGAC"/>
<dbReference type="OrthoDB" id="6150863at2759"/>
<dbReference type="PAN-GO" id="P07358">
    <property type="GO annotations" value="3 GO annotations based on evolutionary models"/>
</dbReference>
<dbReference type="PhylomeDB" id="P07358"/>
<dbReference type="TreeFam" id="TF330498"/>
<dbReference type="PathwayCommons" id="P07358"/>
<dbReference type="Reactome" id="R-HSA-166665">
    <property type="pathway name" value="Terminal pathway of complement"/>
</dbReference>
<dbReference type="Reactome" id="R-HSA-977606">
    <property type="pathway name" value="Regulation of Complement cascade"/>
</dbReference>
<dbReference type="SignaLink" id="P07358"/>
<dbReference type="SIGNOR" id="P07358"/>
<dbReference type="BioGRID-ORCS" id="732">
    <property type="hits" value="14 hits in 1144 CRISPR screens"/>
</dbReference>
<dbReference type="EvolutionaryTrace" id="P07358"/>
<dbReference type="GenomeRNAi" id="732"/>
<dbReference type="Pharos" id="P07358">
    <property type="development level" value="Tbio"/>
</dbReference>
<dbReference type="PRO" id="PR:P07358"/>
<dbReference type="Proteomes" id="UP000005640">
    <property type="component" value="Chromosome 1"/>
</dbReference>
<dbReference type="RNAct" id="P07358">
    <property type="molecule type" value="protein"/>
</dbReference>
<dbReference type="Bgee" id="ENSG00000021852">
    <property type="expression patterns" value="Expressed in right lobe of liver and 79 other cell types or tissues"/>
</dbReference>
<dbReference type="ExpressionAtlas" id="P07358">
    <property type="expression patterns" value="baseline and differential"/>
</dbReference>
<dbReference type="GO" id="GO:0070062">
    <property type="term" value="C:extracellular exosome"/>
    <property type="evidence" value="ECO:0007005"/>
    <property type="project" value="UniProtKB"/>
</dbReference>
<dbReference type="GO" id="GO:0005576">
    <property type="term" value="C:extracellular region"/>
    <property type="evidence" value="ECO:0000304"/>
    <property type="project" value="Reactome"/>
</dbReference>
<dbReference type="GO" id="GO:0005615">
    <property type="term" value="C:extracellular space"/>
    <property type="evidence" value="ECO:0000318"/>
    <property type="project" value="GO_Central"/>
</dbReference>
<dbReference type="GO" id="GO:1903561">
    <property type="term" value="C:extracellular vesicle"/>
    <property type="evidence" value="ECO:0007005"/>
    <property type="project" value="UniProtKB"/>
</dbReference>
<dbReference type="GO" id="GO:0016020">
    <property type="term" value="C:membrane"/>
    <property type="evidence" value="ECO:0000304"/>
    <property type="project" value="ProtInc"/>
</dbReference>
<dbReference type="GO" id="GO:0005579">
    <property type="term" value="C:membrane attack complex"/>
    <property type="evidence" value="ECO:0000314"/>
    <property type="project" value="UniProtKB"/>
</dbReference>
<dbReference type="GO" id="GO:0005886">
    <property type="term" value="C:plasma membrane"/>
    <property type="evidence" value="ECO:0000303"/>
    <property type="project" value="ComplexPortal"/>
</dbReference>
<dbReference type="GO" id="GO:0044877">
    <property type="term" value="F:protein-containing complex binding"/>
    <property type="evidence" value="ECO:0007669"/>
    <property type="project" value="Ensembl"/>
</dbReference>
<dbReference type="GO" id="GO:0006956">
    <property type="term" value="P:complement activation"/>
    <property type="evidence" value="ECO:0000318"/>
    <property type="project" value="GO_Central"/>
</dbReference>
<dbReference type="GO" id="GO:0006957">
    <property type="term" value="P:complement activation, alternative pathway"/>
    <property type="evidence" value="ECO:0007669"/>
    <property type="project" value="UniProtKB-KW"/>
</dbReference>
<dbReference type="GO" id="GO:0006958">
    <property type="term" value="P:complement activation, classical pathway"/>
    <property type="evidence" value="ECO:0007669"/>
    <property type="project" value="UniProtKB-KW"/>
</dbReference>
<dbReference type="GO" id="GO:0006955">
    <property type="term" value="P:immune response"/>
    <property type="evidence" value="ECO:0000304"/>
    <property type="project" value="ProtInc"/>
</dbReference>
<dbReference type="GO" id="GO:0031640">
    <property type="term" value="P:killing of cells of another organism"/>
    <property type="evidence" value="ECO:0007669"/>
    <property type="project" value="UniProtKB-KW"/>
</dbReference>
<dbReference type="GO" id="GO:0050778">
    <property type="term" value="P:positive regulation of immune response"/>
    <property type="evidence" value="ECO:0000303"/>
    <property type="project" value="ComplexPortal"/>
</dbReference>
<dbReference type="CDD" id="cd00112">
    <property type="entry name" value="LDLa"/>
    <property type="match status" value="1"/>
</dbReference>
<dbReference type="FunFam" id="2.20.100.10:FF:000082">
    <property type="entry name" value="Complement component C8 beta chain"/>
    <property type="match status" value="1"/>
</dbReference>
<dbReference type="FunFam" id="4.10.400.10:FF:000069">
    <property type="entry name" value="complement component C8 beta chain"/>
    <property type="match status" value="1"/>
</dbReference>
<dbReference type="Gene3D" id="4.10.400.10">
    <property type="entry name" value="Low-density Lipoprotein Receptor"/>
    <property type="match status" value="1"/>
</dbReference>
<dbReference type="Gene3D" id="2.20.100.10">
    <property type="entry name" value="Thrombospondin type-1 (TSP1) repeat"/>
    <property type="match status" value="2"/>
</dbReference>
<dbReference type="InterPro" id="IPR048831">
    <property type="entry name" value="C8A_B_C6_EGF-like"/>
</dbReference>
<dbReference type="InterPro" id="IPR036055">
    <property type="entry name" value="LDL_receptor-like_sf"/>
</dbReference>
<dbReference type="InterPro" id="IPR023415">
    <property type="entry name" value="LDLR_class-A_CS"/>
</dbReference>
<dbReference type="InterPro" id="IPR002172">
    <property type="entry name" value="LDrepeatLR_classA_rpt"/>
</dbReference>
<dbReference type="InterPro" id="IPR001862">
    <property type="entry name" value="MAC_perforin"/>
</dbReference>
<dbReference type="InterPro" id="IPR020864">
    <property type="entry name" value="MACPF"/>
</dbReference>
<dbReference type="InterPro" id="IPR020863">
    <property type="entry name" value="MACPF_CS"/>
</dbReference>
<dbReference type="InterPro" id="IPR000884">
    <property type="entry name" value="TSP1_rpt"/>
</dbReference>
<dbReference type="InterPro" id="IPR036383">
    <property type="entry name" value="TSP1_rpt_sf"/>
</dbReference>
<dbReference type="PANTHER" id="PTHR45742">
    <property type="entry name" value="COMPLEMENT COMPONENT C6"/>
    <property type="match status" value="1"/>
</dbReference>
<dbReference type="PANTHER" id="PTHR45742:SF5">
    <property type="entry name" value="COMPLEMENT COMPONENT C8 BETA CHAIN"/>
    <property type="match status" value="1"/>
</dbReference>
<dbReference type="Pfam" id="PF21195">
    <property type="entry name" value="EGF_C8A_B_C6"/>
    <property type="match status" value="1"/>
</dbReference>
<dbReference type="Pfam" id="PF00057">
    <property type="entry name" value="Ldl_recept_a"/>
    <property type="match status" value="1"/>
</dbReference>
<dbReference type="Pfam" id="PF01823">
    <property type="entry name" value="MACPF"/>
    <property type="match status" value="1"/>
</dbReference>
<dbReference type="Pfam" id="PF00090">
    <property type="entry name" value="TSP_1"/>
    <property type="match status" value="2"/>
</dbReference>
<dbReference type="PRINTS" id="PR00764">
    <property type="entry name" value="COMPLEMENTC9"/>
</dbReference>
<dbReference type="SMART" id="SM00192">
    <property type="entry name" value="LDLa"/>
    <property type="match status" value="1"/>
</dbReference>
<dbReference type="SMART" id="SM00457">
    <property type="entry name" value="MACPF"/>
    <property type="match status" value="1"/>
</dbReference>
<dbReference type="SMART" id="SM00209">
    <property type="entry name" value="TSP1"/>
    <property type="match status" value="2"/>
</dbReference>
<dbReference type="SUPFAM" id="SSF57424">
    <property type="entry name" value="LDL receptor-like module"/>
    <property type="match status" value="1"/>
</dbReference>
<dbReference type="SUPFAM" id="SSF82895">
    <property type="entry name" value="TSP-1 type 1 repeat"/>
    <property type="match status" value="2"/>
</dbReference>
<dbReference type="PROSITE" id="PS00022">
    <property type="entry name" value="EGF_1"/>
    <property type="match status" value="1"/>
</dbReference>
<dbReference type="PROSITE" id="PS01209">
    <property type="entry name" value="LDLRA_1"/>
    <property type="match status" value="1"/>
</dbReference>
<dbReference type="PROSITE" id="PS50068">
    <property type="entry name" value="LDLRA_2"/>
    <property type="match status" value="1"/>
</dbReference>
<dbReference type="PROSITE" id="PS00279">
    <property type="entry name" value="MACPF_1"/>
    <property type="match status" value="1"/>
</dbReference>
<dbReference type="PROSITE" id="PS51412">
    <property type="entry name" value="MACPF_2"/>
    <property type="match status" value="1"/>
</dbReference>
<dbReference type="PROSITE" id="PS50092">
    <property type="entry name" value="TSP1"/>
    <property type="match status" value="2"/>
</dbReference>
<proteinExistence type="evidence at protein level"/>
<name>CO8B_HUMAN</name>